<reference key="1">
    <citation type="submission" date="2008-01" db="EMBL/GenBank/DDBJ databases">
        <title>Complete sequence of Thermoanaerobacter pseudethanolicus 39E.</title>
        <authorList>
            <person name="Copeland A."/>
            <person name="Lucas S."/>
            <person name="Lapidus A."/>
            <person name="Barry K."/>
            <person name="Glavina del Rio T."/>
            <person name="Dalin E."/>
            <person name="Tice H."/>
            <person name="Pitluck S."/>
            <person name="Bruce D."/>
            <person name="Goodwin L."/>
            <person name="Saunders E."/>
            <person name="Brettin T."/>
            <person name="Detter J.C."/>
            <person name="Han C."/>
            <person name="Schmutz J."/>
            <person name="Larimer F."/>
            <person name="Land M."/>
            <person name="Hauser L."/>
            <person name="Kyrpides N."/>
            <person name="Lykidis A."/>
            <person name="Hemme C."/>
            <person name="Fields M.W."/>
            <person name="He Z."/>
            <person name="Zhou J."/>
            <person name="Richardson P."/>
        </authorList>
    </citation>
    <scope>NUCLEOTIDE SEQUENCE [LARGE SCALE GENOMIC DNA]</scope>
    <source>
        <strain>ATCC 33223 / DSM 2355 / 39E</strain>
    </source>
</reference>
<gene>
    <name evidence="1" type="primary">rplT</name>
    <name type="ordered locus">Teth39_0769</name>
</gene>
<comment type="function">
    <text evidence="1">Binds directly to 23S ribosomal RNA and is necessary for the in vitro assembly process of the 50S ribosomal subunit. It is not involved in the protein synthesizing functions of that subunit.</text>
</comment>
<comment type="similarity">
    <text evidence="1">Belongs to the bacterial ribosomal protein bL20 family.</text>
</comment>
<proteinExistence type="inferred from homology"/>
<feature type="chain" id="PRO_1000122384" description="Large ribosomal subunit protein bL20">
    <location>
        <begin position="1"/>
        <end position="119"/>
    </location>
</feature>
<keyword id="KW-1185">Reference proteome</keyword>
<keyword id="KW-0687">Ribonucleoprotein</keyword>
<keyword id="KW-0689">Ribosomal protein</keyword>
<keyword id="KW-0694">RNA-binding</keyword>
<keyword id="KW-0699">rRNA-binding</keyword>
<protein>
    <recommendedName>
        <fullName evidence="1">Large ribosomal subunit protein bL20</fullName>
    </recommendedName>
    <alternativeName>
        <fullName evidence="2">50S ribosomal protein L20</fullName>
    </alternativeName>
</protein>
<name>RL20_THEP3</name>
<accession>B0K8B5</accession>
<dbReference type="EMBL" id="CP000924">
    <property type="protein sequence ID" value="ABY94428.1"/>
    <property type="molecule type" value="Genomic_DNA"/>
</dbReference>
<dbReference type="RefSeq" id="WP_003871005.1">
    <property type="nucleotide sequence ID" value="NC_010321.1"/>
</dbReference>
<dbReference type="SMR" id="B0K8B5"/>
<dbReference type="STRING" id="340099.Teth39_0769"/>
<dbReference type="KEGG" id="tpd:Teth39_0769"/>
<dbReference type="eggNOG" id="COG0292">
    <property type="taxonomic scope" value="Bacteria"/>
</dbReference>
<dbReference type="HOGENOM" id="CLU_123265_0_1_9"/>
<dbReference type="Proteomes" id="UP000002156">
    <property type="component" value="Chromosome"/>
</dbReference>
<dbReference type="GO" id="GO:1990904">
    <property type="term" value="C:ribonucleoprotein complex"/>
    <property type="evidence" value="ECO:0007669"/>
    <property type="project" value="UniProtKB-KW"/>
</dbReference>
<dbReference type="GO" id="GO:0005840">
    <property type="term" value="C:ribosome"/>
    <property type="evidence" value="ECO:0007669"/>
    <property type="project" value="UniProtKB-KW"/>
</dbReference>
<dbReference type="GO" id="GO:0019843">
    <property type="term" value="F:rRNA binding"/>
    <property type="evidence" value="ECO:0007669"/>
    <property type="project" value="UniProtKB-UniRule"/>
</dbReference>
<dbReference type="GO" id="GO:0003735">
    <property type="term" value="F:structural constituent of ribosome"/>
    <property type="evidence" value="ECO:0007669"/>
    <property type="project" value="InterPro"/>
</dbReference>
<dbReference type="GO" id="GO:0000027">
    <property type="term" value="P:ribosomal large subunit assembly"/>
    <property type="evidence" value="ECO:0007669"/>
    <property type="project" value="UniProtKB-UniRule"/>
</dbReference>
<dbReference type="GO" id="GO:0006412">
    <property type="term" value="P:translation"/>
    <property type="evidence" value="ECO:0007669"/>
    <property type="project" value="InterPro"/>
</dbReference>
<dbReference type="CDD" id="cd07026">
    <property type="entry name" value="Ribosomal_L20"/>
    <property type="match status" value="1"/>
</dbReference>
<dbReference type="FunFam" id="1.10.1900.20:FF:000001">
    <property type="entry name" value="50S ribosomal protein L20"/>
    <property type="match status" value="1"/>
</dbReference>
<dbReference type="Gene3D" id="6.10.160.10">
    <property type="match status" value="1"/>
</dbReference>
<dbReference type="Gene3D" id="1.10.1900.20">
    <property type="entry name" value="Ribosomal protein L20"/>
    <property type="match status" value="1"/>
</dbReference>
<dbReference type="HAMAP" id="MF_00382">
    <property type="entry name" value="Ribosomal_bL20"/>
    <property type="match status" value="1"/>
</dbReference>
<dbReference type="InterPro" id="IPR005813">
    <property type="entry name" value="Ribosomal_bL20"/>
</dbReference>
<dbReference type="InterPro" id="IPR049946">
    <property type="entry name" value="RIBOSOMAL_L20_CS"/>
</dbReference>
<dbReference type="InterPro" id="IPR035566">
    <property type="entry name" value="Ribosomal_protein_bL20_C"/>
</dbReference>
<dbReference type="NCBIfam" id="TIGR01032">
    <property type="entry name" value="rplT_bact"/>
    <property type="match status" value="1"/>
</dbReference>
<dbReference type="PANTHER" id="PTHR10986">
    <property type="entry name" value="39S RIBOSOMAL PROTEIN L20"/>
    <property type="match status" value="1"/>
</dbReference>
<dbReference type="Pfam" id="PF00453">
    <property type="entry name" value="Ribosomal_L20"/>
    <property type="match status" value="1"/>
</dbReference>
<dbReference type="PRINTS" id="PR00062">
    <property type="entry name" value="RIBOSOMALL20"/>
</dbReference>
<dbReference type="SUPFAM" id="SSF74731">
    <property type="entry name" value="Ribosomal protein L20"/>
    <property type="match status" value="1"/>
</dbReference>
<dbReference type="PROSITE" id="PS00937">
    <property type="entry name" value="RIBOSOMAL_L20"/>
    <property type="match status" value="1"/>
</dbReference>
<sequence>MARVKFGKVTRRRRKKILKLAKGYFGAKSKLFRVANQAVMKSLMYAYIGRKLRKRDFRKLWITRINAAARAHGISYSRFINGLKKAGIEINRKMLSEMAINDEKAFAELVNIAKQQLNA</sequence>
<evidence type="ECO:0000255" key="1">
    <source>
        <dbReference type="HAMAP-Rule" id="MF_00382"/>
    </source>
</evidence>
<evidence type="ECO:0000305" key="2"/>
<organism>
    <name type="scientific">Thermoanaerobacter pseudethanolicus (strain ATCC 33223 / 39E)</name>
    <name type="common">Clostridium thermohydrosulfuricum</name>
    <dbReference type="NCBI Taxonomy" id="340099"/>
    <lineage>
        <taxon>Bacteria</taxon>
        <taxon>Bacillati</taxon>
        <taxon>Bacillota</taxon>
        <taxon>Clostridia</taxon>
        <taxon>Thermoanaerobacterales</taxon>
        <taxon>Thermoanaerobacteraceae</taxon>
        <taxon>Thermoanaerobacter</taxon>
    </lineage>
</organism>